<reference key="1">
    <citation type="journal article" date="1998" name="Infect. Immun.">
        <title>DNA sequencing and analysis of the low-Ca2+-response plasmid pCD1 of Yersinia pestis KIM5.</title>
        <authorList>
            <person name="Perry R.D."/>
            <person name="Straley S.C."/>
            <person name="Fetherston J.D."/>
            <person name="Rose D.J."/>
            <person name="Gregor J."/>
            <person name="Blattner F.R."/>
        </authorList>
    </citation>
    <scope>NUCLEOTIDE SEQUENCE [GENOMIC DNA]</scope>
    <source>
        <strain>KIM5 / Biovar Mediaevalis</strain>
    </source>
</reference>
<reference key="2">
    <citation type="journal article" date="1998" name="J. Bacteriol.">
        <title>Structural organization of virulence-associated plasmids of Yersinia pestis.</title>
        <authorList>
            <person name="Hu P."/>
            <person name="Elliott J."/>
            <person name="McCready P."/>
            <person name="Skowronski E."/>
            <person name="Garnes J."/>
            <person name="Kobayashi A."/>
            <person name="Brubaker R.R."/>
            <person name="Garcia E."/>
        </authorList>
    </citation>
    <scope>NUCLEOTIDE SEQUENCE [GENOMIC DNA]</scope>
    <source>
        <strain>KIM5 / Biovar Mediaevalis</strain>
    </source>
</reference>
<reference key="3">
    <citation type="journal article" date="2001" name="Nature">
        <title>Genome sequence of Yersinia pestis, the causative agent of plague.</title>
        <authorList>
            <person name="Parkhill J."/>
            <person name="Wren B.W."/>
            <person name="Thomson N.R."/>
            <person name="Titball R.W."/>
            <person name="Holden M.T.G."/>
            <person name="Prentice M.B."/>
            <person name="Sebaihia M."/>
            <person name="James K.D."/>
            <person name="Churcher C.M."/>
            <person name="Mungall K.L."/>
            <person name="Baker S."/>
            <person name="Basham D."/>
            <person name="Bentley S.D."/>
            <person name="Brooks K."/>
            <person name="Cerdeno-Tarraga A.-M."/>
            <person name="Chillingworth T."/>
            <person name="Cronin A."/>
            <person name="Davies R.M."/>
            <person name="Davis P."/>
            <person name="Dougan G."/>
            <person name="Feltwell T."/>
            <person name="Hamlin N."/>
            <person name="Holroyd S."/>
            <person name="Jagels K."/>
            <person name="Karlyshev A.V."/>
            <person name="Leather S."/>
            <person name="Moule S."/>
            <person name="Oyston P.C.F."/>
            <person name="Quail M.A."/>
            <person name="Rutherford K.M."/>
            <person name="Simmonds M."/>
            <person name="Skelton J."/>
            <person name="Stevens K."/>
            <person name="Whitehead S."/>
            <person name="Barrell B.G."/>
        </authorList>
    </citation>
    <scope>NUCLEOTIDE SEQUENCE [LARGE SCALE GENOMIC DNA]</scope>
    <source>
        <strain>CO-92 / Biovar Orientalis</strain>
    </source>
</reference>
<reference key="4">
    <citation type="journal article" date="2004" name="DNA Res.">
        <title>Complete genome sequence of Yersinia pestis strain 91001, an isolate avirulent to humans.</title>
        <authorList>
            <person name="Song Y."/>
            <person name="Tong Z."/>
            <person name="Wang J."/>
            <person name="Wang L."/>
            <person name="Guo Z."/>
            <person name="Han Y."/>
            <person name="Zhang J."/>
            <person name="Pei D."/>
            <person name="Zhou D."/>
            <person name="Qin H."/>
            <person name="Pang X."/>
            <person name="Han Y."/>
            <person name="Zhai J."/>
            <person name="Li M."/>
            <person name="Cui B."/>
            <person name="Qi Z."/>
            <person name="Jin L."/>
            <person name="Dai R."/>
            <person name="Chen F."/>
            <person name="Li S."/>
            <person name="Ye C."/>
            <person name="Du Z."/>
            <person name="Lin W."/>
            <person name="Wang J."/>
            <person name="Yu J."/>
            <person name="Yang H."/>
            <person name="Wang J."/>
            <person name="Huang P."/>
            <person name="Yang R."/>
        </authorList>
    </citation>
    <scope>NUCLEOTIDE SEQUENCE [LARGE SCALE GENOMIC DNA]</scope>
    <source>
        <strain>91001 / Biovar Mediaevalis</strain>
    </source>
</reference>
<reference key="5">
    <citation type="journal article" date="2000" name="J. Bacteriol.">
        <title>The Yersinia pestis YscY protein directly binds YscX, a secreted component of the type III secretion machinery.</title>
        <authorList>
            <person name="Day J.B."/>
            <person name="Plano G.V."/>
        </authorList>
    </citation>
    <scope>FUNCTION</scope>
    <scope>SUBUNIT</scope>
    <scope>SUBCELLULAR LOCATION</scope>
    <source>
        <strain>KIM8</strain>
    </source>
</reference>
<proteinExistence type="evidence at protein level"/>
<protein>
    <recommendedName>
        <fullName>Chaperone protein YscY</fullName>
    </recommendedName>
    <alternativeName>
        <fullName>Yop proteins translocation protein Y</fullName>
    </alternativeName>
</protein>
<evidence type="ECO:0000269" key="1">
    <source>
    </source>
</evidence>
<geneLocation type="plasmid">
    <name>pCD1</name>
</geneLocation>
<feature type="chain" id="PRO_0000066502" description="Chaperone protein YscY">
    <location>
        <begin position="1"/>
        <end position="114"/>
    </location>
</feature>
<sequence>MNITLTKRQQEFLLLNGWLQLQCGHAERACILLDALLTLNPEHLAGRRCRLVALLNNNQGERAEKEAQWLISHDPLQAGNWLCLSRAQQLNGDLDKARHAYQHYLELKDHNESP</sequence>
<name>YSCY_YERPE</name>
<organism>
    <name type="scientific">Yersinia pestis</name>
    <dbReference type="NCBI Taxonomy" id="632"/>
    <lineage>
        <taxon>Bacteria</taxon>
        <taxon>Pseudomonadati</taxon>
        <taxon>Pseudomonadota</taxon>
        <taxon>Gammaproteobacteria</taxon>
        <taxon>Enterobacterales</taxon>
        <taxon>Yersiniaceae</taxon>
        <taxon>Yersinia</taxon>
    </lineage>
</organism>
<accession>P61417</accession>
<accession>P21209</accession>
<gene>
    <name type="primary">yscY</name>
    <name type="ordered locus">YPCD1.35c</name>
    <name type="ordered locus">y5043</name>
    <name type="ordered locus">y0046</name>
    <name type="ordered locus">YP_pCD48</name>
</gene>
<keyword id="KW-0143">Chaperone</keyword>
<keyword id="KW-0963">Cytoplasm</keyword>
<keyword id="KW-0614">Plasmid</keyword>
<keyword id="KW-1185">Reference proteome</keyword>
<comment type="function">
    <text evidence="1">Required for Yop secretion. Functions probably as a chaperone which stabilizes YscX within the cell, before its secretion.</text>
</comment>
<comment type="subunit">
    <text evidence="1">Binds to YscX.</text>
</comment>
<comment type="interaction">
    <interactant intactId="EBI-20592244">
        <id>P61417</id>
    </interactant>
    <interactant intactId="EBI-740019">
        <id>O15162</id>
        <label>PLSCR1</label>
    </interactant>
    <organismsDiffer>true</organismsDiffer>
    <experiments>2</experiments>
</comment>
<comment type="subcellular location">
    <subcellularLocation>
        <location evidence="1">Cytoplasm</location>
    </subcellularLocation>
</comment>
<dbReference type="EMBL" id="AF074612">
    <property type="protein sequence ID" value="AAC69796.1"/>
    <property type="molecule type" value="Genomic_DNA"/>
</dbReference>
<dbReference type="EMBL" id="AF053946">
    <property type="protein sequence ID" value="AAC62570.1"/>
    <property type="molecule type" value="Genomic_DNA"/>
</dbReference>
<dbReference type="EMBL" id="AL117189">
    <property type="protein sequence ID" value="CAB54912.1"/>
    <property type="molecule type" value="Genomic_DNA"/>
</dbReference>
<dbReference type="EMBL" id="AE017043">
    <property type="protein sequence ID" value="AAS58567.1"/>
    <property type="molecule type" value="Genomic_DNA"/>
</dbReference>
<dbReference type="PIR" id="T43590">
    <property type="entry name" value="T43590"/>
</dbReference>
<dbReference type="RefSeq" id="NP_395169.1">
    <property type="nucleotide sequence ID" value="NC_003131.1"/>
</dbReference>
<dbReference type="RefSeq" id="NP_857747.1">
    <property type="nucleotide sequence ID" value="NC_004836.1"/>
</dbReference>
<dbReference type="RefSeq" id="NP_857942.1">
    <property type="nucleotide sequence ID" value="NC_004839.1"/>
</dbReference>
<dbReference type="RefSeq" id="WP_002229791.1">
    <property type="nucleotide sequence ID" value="NZ_WUCM01000070.1"/>
</dbReference>
<dbReference type="SMR" id="P61417"/>
<dbReference type="IntAct" id="P61417">
    <property type="interactions" value="12"/>
</dbReference>
<dbReference type="MINT" id="P61417"/>
<dbReference type="PaxDb" id="214092-5832455"/>
<dbReference type="DNASU" id="1149306"/>
<dbReference type="EnsemblBacteria" id="AAS58567">
    <property type="protein sequence ID" value="AAS58567"/>
    <property type="gene ID" value="YP_pCD48"/>
</dbReference>
<dbReference type="GeneID" id="31412303"/>
<dbReference type="KEGG" id="ype:YPCD1.35c"/>
<dbReference type="KEGG" id="ypm:YP_pCD48"/>
<dbReference type="PATRIC" id="fig|214092.21.peg.46"/>
<dbReference type="eggNOG" id="COG0457">
    <property type="taxonomic scope" value="Bacteria"/>
</dbReference>
<dbReference type="HOGENOM" id="CLU_170441_0_0_6"/>
<dbReference type="OMA" id="GWLQLQY"/>
<dbReference type="OrthoDB" id="7026286at2"/>
<dbReference type="Proteomes" id="UP000000815">
    <property type="component" value="Plasmid pCD1"/>
</dbReference>
<dbReference type="Proteomes" id="UP000001019">
    <property type="component" value="Plasmid pCD1"/>
</dbReference>
<dbReference type="GO" id="GO:0005737">
    <property type="term" value="C:cytoplasm"/>
    <property type="evidence" value="ECO:0007669"/>
    <property type="project" value="UniProtKB-SubCell"/>
</dbReference>
<dbReference type="Gene3D" id="1.25.40.10">
    <property type="entry name" value="Tetratricopeptide repeat domain"/>
    <property type="match status" value="1"/>
</dbReference>
<dbReference type="InterPro" id="IPR016684">
    <property type="entry name" value="T3SS_YscY"/>
</dbReference>
<dbReference type="InterPro" id="IPR011990">
    <property type="entry name" value="TPR-like_helical_dom_sf"/>
</dbReference>
<dbReference type="PIRSF" id="PIRSF017117">
    <property type="entry name" value="T3SS_YscY"/>
    <property type="match status" value="1"/>
</dbReference>
<dbReference type="SUPFAM" id="SSF48452">
    <property type="entry name" value="TPR-like"/>
    <property type="match status" value="1"/>
</dbReference>